<feature type="signal peptide" evidence="2">
    <location>
        <begin position="1"/>
        <end position="27"/>
    </location>
</feature>
<feature type="chain" id="PRO_0000045789" description="Transmembrane and immunoglobulin domain-containing protein 1">
    <location>
        <begin position="28"/>
        <end position="261"/>
    </location>
</feature>
<feature type="topological domain" description="Extracellular" evidence="2">
    <location>
        <begin position="28"/>
        <end position="219"/>
    </location>
</feature>
<feature type="transmembrane region" description="Helical" evidence="2">
    <location>
        <begin position="220"/>
        <end position="240"/>
    </location>
</feature>
<feature type="topological domain" description="Cytoplasmic" evidence="2">
    <location>
        <begin position="241"/>
        <end position="261"/>
    </location>
</feature>
<feature type="domain" description="Ig-like C2-type 1">
    <location>
        <begin position="28"/>
        <end position="114"/>
    </location>
</feature>
<feature type="domain" description="Ig-like C2-type 2">
    <location>
        <begin position="122"/>
        <end position="208"/>
    </location>
</feature>
<feature type="glycosylation site" description="N-linked (GlcNAc...) asparagine" evidence="2">
    <location>
        <position position="83"/>
    </location>
</feature>
<feature type="glycosylation site" description="N-linked (GlcNAc...) asparagine" evidence="2">
    <location>
        <position position="108"/>
    </location>
</feature>
<feature type="glycosylation site" description="N-linked (GlcNAc...) asparagine" evidence="2">
    <location>
        <position position="118"/>
    </location>
</feature>
<feature type="glycosylation site" description="N-linked (GlcNAc...) asparagine" evidence="2">
    <location>
        <position position="189"/>
    </location>
</feature>
<feature type="disulfide bond" evidence="3">
    <location>
        <begin position="54"/>
        <end position="103"/>
    </location>
</feature>
<feature type="disulfide bond" evidence="3">
    <location>
        <begin position="143"/>
        <end position="194"/>
    </location>
</feature>
<dbReference type="EMBL" id="BC102165">
    <property type="protein sequence ID" value="AAI02166.1"/>
    <property type="molecule type" value="mRNA"/>
</dbReference>
<dbReference type="RefSeq" id="NP_001030208.1">
    <property type="nucleotide sequence ID" value="NM_001035036.2"/>
</dbReference>
<dbReference type="SMR" id="Q3T113"/>
<dbReference type="FunCoup" id="Q3T113">
    <property type="interactions" value="43"/>
</dbReference>
<dbReference type="STRING" id="9913.ENSBTAP00000003375"/>
<dbReference type="GlyCosmos" id="Q3T113">
    <property type="glycosylation" value="4 sites, No reported glycans"/>
</dbReference>
<dbReference type="GlyGen" id="Q3T113">
    <property type="glycosylation" value="4 sites"/>
</dbReference>
<dbReference type="PaxDb" id="9913-ENSBTAP00000003375"/>
<dbReference type="GeneID" id="506345"/>
<dbReference type="KEGG" id="bta:506345"/>
<dbReference type="CTD" id="388364"/>
<dbReference type="eggNOG" id="ENOG502RZZ3">
    <property type="taxonomic scope" value="Eukaryota"/>
</dbReference>
<dbReference type="InParanoid" id="Q3T113"/>
<dbReference type="OrthoDB" id="6106100at2759"/>
<dbReference type="Proteomes" id="UP000009136">
    <property type="component" value="Unplaced"/>
</dbReference>
<dbReference type="GO" id="GO:0005737">
    <property type="term" value="C:cytoplasm"/>
    <property type="evidence" value="ECO:0000250"/>
    <property type="project" value="UniProtKB"/>
</dbReference>
<dbReference type="GO" id="GO:0043005">
    <property type="term" value="C:neuron projection"/>
    <property type="evidence" value="ECO:0000318"/>
    <property type="project" value="GO_Central"/>
</dbReference>
<dbReference type="GO" id="GO:0005886">
    <property type="term" value="C:plasma membrane"/>
    <property type="evidence" value="ECO:0000250"/>
    <property type="project" value="UniProtKB"/>
</dbReference>
<dbReference type="GO" id="GO:0043066">
    <property type="term" value="P:negative regulation of apoptotic process"/>
    <property type="evidence" value="ECO:0000250"/>
    <property type="project" value="UniProtKB"/>
</dbReference>
<dbReference type="GO" id="GO:0030334">
    <property type="term" value="P:regulation of cell migration"/>
    <property type="evidence" value="ECO:0000250"/>
    <property type="project" value="UniProtKB"/>
</dbReference>
<dbReference type="GO" id="GO:0042127">
    <property type="term" value="P:regulation of cell population proliferation"/>
    <property type="evidence" value="ECO:0000250"/>
    <property type="project" value="UniProtKB"/>
</dbReference>
<dbReference type="GO" id="GO:0090559">
    <property type="term" value="P:regulation of membrane permeability"/>
    <property type="evidence" value="ECO:0000250"/>
    <property type="project" value="UniProtKB"/>
</dbReference>
<dbReference type="CDD" id="cd00096">
    <property type="entry name" value="Ig"/>
    <property type="match status" value="1"/>
</dbReference>
<dbReference type="FunFam" id="2.60.40.10:FF:001938">
    <property type="entry name" value="Transmembrane and immunoglobulin domain-containing protein 1"/>
    <property type="match status" value="1"/>
</dbReference>
<dbReference type="Gene3D" id="2.60.40.10">
    <property type="entry name" value="Immunoglobulins"/>
    <property type="match status" value="1"/>
</dbReference>
<dbReference type="InterPro" id="IPR051275">
    <property type="entry name" value="Cell_adhesion_signaling"/>
</dbReference>
<dbReference type="InterPro" id="IPR007110">
    <property type="entry name" value="Ig-like_dom"/>
</dbReference>
<dbReference type="InterPro" id="IPR036179">
    <property type="entry name" value="Ig-like_dom_sf"/>
</dbReference>
<dbReference type="InterPro" id="IPR013783">
    <property type="entry name" value="Ig-like_fold"/>
</dbReference>
<dbReference type="InterPro" id="IPR013098">
    <property type="entry name" value="Ig_I-set"/>
</dbReference>
<dbReference type="InterPro" id="IPR003599">
    <property type="entry name" value="Ig_sub"/>
</dbReference>
<dbReference type="InterPro" id="IPR003598">
    <property type="entry name" value="Ig_sub2"/>
</dbReference>
<dbReference type="PANTHER" id="PTHR11640:SF31">
    <property type="entry name" value="IRREGULAR CHIASM C-ROUGHEST PROTEIN-RELATED"/>
    <property type="match status" value="1"/>
</dbReference>
<dbReference type="PANTHER" id="PTHR11640">
    <property type="entry name" value="NEPHRIN"/>
    <property type="match status" value="1"/>
</dbReference>
<dbReference type="Pfam" id="PF07679">
    <property type="entry name" value="I-set"/>
    <property type="match status" value="1"/>
</dbReference>
<dbReference type="SMART" id="SM00409">
    <property type="entry name" value="IG"/>
    <property type="match status" value="1"/>
</dbReference>
<dbReference type="SMART" id="SM00408">
    <property type="entry name" value="IGc2"/>
    <property type="match status" value="1"/>
</dbReference>
<dbReference type="SUPFAM" id="SSF48726">
    <property type="entry name" value="Immunoglobulin"/>
    <property type="match status" value="1"/>
</dbReference>
<dbReference type="PROSITE" id="PS50835">
    <property type="entry name" value="IG_LIKE"/>
    <property type="match status" value="2"/>
</dbReference>
<name>TMIG1_BOVIN</name>
<protein>
    <recommendedName>
        <fullName evidence="1">Transmembrane and immunoglobulin domain-containing protein 1</fullName>
    </recommendedName>
</protein>
<evidence type="ECO:0000250" key="1">
    <source>
        <dbReference type="UniProtKB" id="Q6UXZ0"/>
    </source>
</evidence>
<evidence type="ECO:0000255" key="2"/>
<evidence type="ECO:0000255" key="3">
    <source>
        <dbReference type="PROSITE-ProRule" id="PRU00114"/>
    </source>
</evidence>
<comment type="function">
    <text evidence="1">May control cell-cell adhesion, cell migration and proliferation, cell morphology, and protects renal epithelial cells from oxidative cell injury to promote cell survival.</text>
</comment>
<comment type="subunit">
    <text evidence="1">Homodimer.</text>
</comment>
<comment type="subcellular location">
    <subcellularLocation>
        <location evidence="1">Cell membrane</location>
        <topology evidence="1">Single-pass type I membrane protein</topology>
    </subcellularLocation>
    <subcellularLocation>
        <location evidence="1">Cytoplasm</location>
    </subcellularLocation>
</comment>
<comment type="PTM">
    <text evidence="1">N-glycosylated.</text>
</comment>
<accession>Q3T113</accession>
<sequence length="261" mass="29229">MAQKTSGLIQRCRFLLLMILFLPHVMTSSVLSVNGKTENYILDTEPGLQESLKCAVQNHIRDEELLWYREDGRVDLKSGNKINSSSVCVSGISEDDNGITFTCKLQRNQSVSISVVLNVTFPPLLSGNDFQTAEEGSDVKLVCNVKSNPQAQMMWYKNNGILNLENHHQIQQTSEYFQLSITKVKKSDNGTYSCIANSLIETKTKDFHLIVKDKGSTVPIEPIIAACVVVFLTLVFGVIARRKRIMKLCRKDQGPQCRTAL</sequence>
<reference key="1">
    <citation type="submission" date="2005-08" db="EMBL/GenBank/DDBJ databases">
        <authorList>
            <consortium name="NIH - Mammalian Gene Collection (MGC) project"/>
        </authorList>
    </citation>
    <scope>NUCLEOTIDE SEQUENCE [LARGE SCALE MRNA]</scope>
    <source>
        <strain>Crossbred X Angus</strain>
        <tissue>Ileum</tissue>
    </source>
</reference>
<gene>
    <name evidence="1" type="primary">TMIGD1</name>
    <name evidence="1" type="synonym">TMIGD</name>
</gene>
<keyword id="KW-1003">Cell membrane</keyword>
<keyword id="KW-0963">Cytoplasm</keyword>
<keyword id="KW-1015">Disulfide bond</keyword>
<keyword id="KW-0325">Glycoprotein</keyword>
<keyword id="KW-0393">Immunoglobulin domain</keyword>
<keyword id="KW-0472">Membrane</keyword>
<keyword id="KW-1185">Reference proteome</keyword>
<keyword id="KW-0677">Repeat</keyword>
<keyword id="KW-0732">Signal</keyword>
<keyword id="KW-0812">Transmembrane</keyword>
<keyword id="KW-1133">Transmembrane helix</keyword>
<organism>
    <name type="scientific">Bos taurus</name>
    <name type="common">Bovine</name>
    <dbReference type="NCBI Taxonomy" id="9913"/>
    <lineage>
        <taxon>Eukaryota</taxon>
        <taxon>Metazoa</taxon>
        <taxon>Chordata</taxon>
        <taxon>Craniata</taxon>
        <taxon>Vertebrata</taxon>
        <taxon>Euteleostomi</taxon>
        <taxon>Mammalia</taxon>
        <taxon>Eutheria</taxon>
        <taxon>Laurasiatheria</taxon>
        <taxon>Artiodactyla</taxon>
        <taxon>Ruminantia</taxon>
        <taxon>Pecora</taxon>
        <taxon>Bovidae</taxon>
        <taxon>Bovinae</taxon>
        <taxon>Bos</taxon>
    </lineage>
</organism>
<proteinExistence type="evidence at transcript level"/>